<name>RS14_SHEFN</name>
<sequence>MAKTSMKAREAKRAQLVAKYAEKRLALKAIISSPATSEEDRWDAVLKLQALPRDSSAARQRNRCNQTGRPHGFLRKFGLSRIKLREATMRGEVPGLRKASW</sequence>
<comment type="function">
    <text evidence="1">Binds 16S rRNA, required for the assembly of 30S particles and may also be responsible for determining the conformation of the 16S rRNA at the A site.</text>
</comment>
<comment type="subunit">
    <text evidence="1">Part of the 30S ribosomal subunit. Contacts proteins S3 and S10.</text>
</comment>
<comment type="similarity">
    <text evidence="1">Belongs to the universal ribosomal protein uS14 family.</text>
</comment>
<dbReference type="EMBL" id="CP000447">
    <property type="protein sequence ID" value="ABI70024.1"/>
    <property type="molecule type" value="Genomic_DNA"/>
</dbReference>
<dbReference type="RefSeq" id="WP_011635652.1">
    <property type="nucleotide sequence ID" value="NC_008345.1"/>
</dbReference>
<dbReference type="SMR" id="Q089P1"/>
<dbReference type="STRING" id="318167.Sfri_0161"/>
<dbReference type="GeneID" id="90572194"/>
<dbReference type="KEGG" id="sfr:Sfri_0161"/>
<dbReference type="eggNOG" id="COG0199">
    <property type="taxonomic scope" value="Bacteria"/>
</dbReference>
<dbReference type="HOGENOM" id="CLU_139869_0_1_6"/>
<dbReference type="OrthoDB" id="9810484at2"/>
<dbReference type="Proteomes" id="UP000000684">
    <property type="component" value="Chromosome"/>
</dbReference>
<dbReference type="GO" id="GO:0005737">
    <property type="term" value="C:cytoplasm"/>
    <property type="evidence" value="ECO:0007669"/>
    <property type="project" value="UniProtKB-ARBA"/>
</dbReference>
<dbReference type="GO" id="GO:0015935">
    <property type="term" value="C:small ribosomal subunit"/>
    <property type="evidence" value="ECO:0007669"/>
    <property type="project" value="TreeGrafter"/>
</dbReference>
<dbReference type="GO" id="GO:0019843">
    <property type="term" value="F:rRNA binding"/>
    <property type="evidence" value="ECO:0007669"/>
    <property type="project" value="UniProtKB-UniRule"/>
</dbReference>
<dbReference type="GO" id="GO:0003735">
    <property type="term" value="F:structural constituent of ribosome"/>
    <property type="evidence" value="ECO:0007669"/>
    <property type="project" value="InterPro"/>
</dbReference>
<dbReference type="GO" id="GO:0006412">
    <property type="term" value="P:translation"/>
    <property type="evidence" value="ECO:0007669"/>
    <property type="project" value="UniProtKB-UniRule"/>
</dbReference>
<dbReference type="FunFam" id="1.10.287.1480:FF:000001">
    <property type="entry name" value="30S ribosomal protein S14"/>
    <property type="match status" value="1"/>
</dbReference>
<dbReference type="Gene3D" id="1.10.287.1480">
    <property type="match status" value="1"/>
</dbReference>
<dbReference type="HAMAP" id="MF_00537">
    <property type="entry name" value="Ribosomal_uS14_1"/>
    <property type="match status" value="1"/>
</dbReference>
<dbReference type="InterPro" id="IPR001209">
    <property type="entry name" value="Ribosomal_uS14"/>
</dbReference>
<dbReference type="InterPro" id="IPR023036">
    <property type="entry name" value="Ribosomal_uS14_bac/plastid"/>
</dbReference>
<dbReference type="InterPro" id="IPR018271">
    <property type="entry name" value="Ribosomal_uS14_CS"/>
</dbReference>
<dbReference type="NCBIfam" id="NF006477">
    <property type="entry name" value="PRK08881.1"/>
    <property type="match status" value="1"/>
</dbReference>
<dbReference type="PANTHER" id="PTHR19836">
    <property type="entry name" value="30S RIBOSOMAL PROTEIN S14"/>
    <property type="match status" value="1"/>
</dbReference>
<dbReference type="PANTHER" id="PTHR19836:SF19">
    <property type="entry name" value="SMALL RIBOSOMAL SUBUNIT PROTEIN US14M"/>
    <property type="match status" value="1"/>
</dbReference>
<dbReference type="Pfam" id="PF00253">
    <property type="entry name" value="Ribosomal_S14"/>
    <property type="match status" value="1"/>
</dbReference>
<dbReference type="SUPFAM" id="SSF57716">
    <property type="entry name" value="Glucocorticoid receptor-like (DNA-binding domain)"/>
    <property type="match status" value="1"/>
</dbReference>
<dbReference type="PROSITE" id="PS00527">
    <property type="entry name" value="RIBOSOMAL_S14"/>
    <property type="match status" value="1"/>
</dbReference>
<keyword id="KW-1185">Reference proteome</keyword>
<keyword id="KW-0687">Ribonucleoprotein</keyword>
<keyword id="KW-0689">Ribosomal protein</keyword>
<keyword id="KW-0694">RNA-binding</keyword>
<keyword id="KW-0699">rRNA-binding</keyword>
<feature type="chain" id="PRO_1000128574" description="Small ribosomal subunit protein uS14">
    <location>
        <begin position="1"/>
        <end position="101"/>
    </location>
</feature>
<proteinExistence type="inferred from homology"/>
<reference key="1">
    <citation type="submission" date="2006-08" db="EMBL/GenBank/DDBJ databases">
        <title>Complete sequence of Shewanella frigidimarina NCIMB 400.</title>
        <authorList>
            <consortium name="US DOE Joint Genome Institute"/>
            <person name="Copeland A."/>
            <person name="Lucas S."/>
            <person name="Lapidus A."/>
            <person name="Barry K."/>
            <person name="Detter J.C."/>
            <person name="Glavina del Rio T."/>
            <person name="Hammon N."/>
            <person name="Israni S."/>
            <person name="Dalin E."/>
            <person name="Tice H."/>
            <person name="Pitluck S."/>
            <person name="Fredrickson J.K."/>
            <person name="Kolker E."/>
            <person name="McCuel L.A."/>
            <person name="DiChristina T."/>
            <person name="Nealson K.H."/>
            <person name="Newman D."/>
            <person name="Tiedje J.M."/>
            <person name="Zhou J."/>
            <person name="Romine M.F."/>
            <person name="Culley D.E."/>
            <person name="Serres M."/>
            <person name="Chertkov O."/>
            <person name="Brettin T."/>
            <person name="Bruce D."/>
            <person name="Han C."/>
            <person name="Tapia R."/>
            <person name="Gilna P."/>
            <person name="Schmutz J."/>
            <person name="Larimer F."/>
            <person name="Land M."/>
            <person name="Hauser L."/>
            <person name="Kyrpides N."/>
            <person name="Mikhailova N."/>
            <person name="Richardson P."/>
        </authorList>
    </citation>
    <scope>NUCLEOTIDE SEQUENCE [LARGE SCALE GENOMIC DNA]</scope>
    <source>
        <strain>NCIMB 400</strain>
    </source>
</reference>
<protein>
    <recommendedName>
        <fullName evidence="1">Small ribosomal subunit protein uS14</fullName>
    </recommendedName>
    <alternativeName>
        <fullName evidence="2">30S ribosomal protein S14</fullName>
    </alternativeName>
</protein>
<gene>
    <name evidence="1" type="primary">rpsN</name>
    <name type="ordered locus">Sfri_0161</name>
</gene>
<accession>Q089P1</accession>
<organism>
    <name type="scientific">Shewanella frigidimarina (strain NCIMB 400)</name>
    <dbReference type="NCBI Taxonomy" id="318167"/>
    <lineage>
        <taxon>Bacteria</taxon>
        <taxon>Pseudomonadati</taxon>
        <taxon>Pseudomonadota</taxon>
        <taxon>Gammaproteobacteria</taxon>
        <taxon>Alteromonadales</taxon>
        <taxon>Shewanellaceae</taxon>
        <taxon>Shewanella</taxon>
    </lineage>
</organism>
<evidence type="ECO:0000255" key="1">
    <source>
        <dbReference type="HAMAP-Rule" id="MF_00537"/>
    </source>
</evidence>
<evidence type="ECO:0000305" key="2"/>